<name>SYW_THEKO</name>
<gene>
    <name evidence="1" type="primary">trpS</name>
    <name type="ordered locus">TK1874</name>
</gene>
<reference key="1">
    <citation type="journal article" date="2005" name="Genome Res.">
        <title>Complete genome sequence of the hyperthermophilic archaeon Thermococcus kodakaraensis KOD1 and comparison with Pyrococcus genomes.</title>
        <authorList>
            <person name="Fukui T."/>
            <person name="Atomi H."/>
            <person name="Kanai T."/>
            <person name="Matsumi R."/>
            <person name="Fujiwara S."/>
            <person name="Imanaka T."/>
        </authorList>
    </citation>
    <scope>NUCLEOTIDE SEQUENCE [LARGE SCALE GENOMIC DNA]</scope>
    <source>
        <strain>ATCC BAA-918 / JCM 12380 / KOD1</strain>
    </source>
</reference>
<organism>
    <name type="scientific">Thermococcus kodakarensis (strain ATCC BAA-918 / JCM 12380 / KOD1)</name>
    <name type="common">Pyrococcus kodakaraensis (strain KOD1)</name>
    <dbReference type="NCBI Taxonomy" id="69014"/>
    <lineage>
        <taxon>Archaea</taxon>
        <taxon>Methanobacteriati</taxon>
        <taxon>Methanobacteriota</taxon>
        <taxon>Thermococci</taxon>
        <taxon>Thermococcales</taxon>
        <taxon>Thermococcaceae</taxon>
        <taxon>Thermococcus</taxon>
    </lineage>
</organism>
<keyword id="KW-0030">Aminoacyl-tRNA synthetase</keyword>
<keyword id="KW-0067">ATP-binding</keyword>
<keyword id="KW-0963">Cytoplasm</keyword>
<keyword id="KW-0436">Ligase</keyword>
<keyword id="KW-0547">Nucleotide-binding</keyword>
<keyword id="KW-0648">Protein biosynthesis</keyword>
<keyword id="KW-1185">Reference proteome</keyword>
<sequence>MDDFKVTPWDVEGVVDYNKLIEQFGTSPLTDELIEKTAELTKSELPLFFRRRFFFSHRDYDKVLADYESGRGFFLYTGRGPSGPMHIGHIIPFFATKWLQENFDVNLYIQITDDEKFLFKEKLSFEDTKRWAYENILDIIAVGFDPDKTFIFQNSEFTKIYEMALPIAKKINFSMARAVFGFNEQSKIGMIFYPAIQAAPTFFEKKRCLIPAAIDQDPYWRLQRDFAESLGYYKTAAIHSKFVPGLTSLEGKMSASKPETAVYLTDDPEEAGKKIWKFALTGGQPTLKEQREKGGNPEKCVVFKWFEIFFEPDDEKLMERYRACKAGELTCGQCKRELIERVQKFLKEHQKKRKEAEKKVEKFKYTGELAQEQWDKAIPEPLRT</sequence>
<evidence type="ECO:0000255" key="1">
    <source>
        <dbReference type="HAMAP-Rule" id="MF_00140"/>
    </source>
</evidence>
<proteinExistence type="inferred from homology"/>
<feature type="chain" id="PRO_0000136731" description="Tryptophan--tRNA ligase">
    <location>
        <begin position="1"/>
        <end position="384"/>
    </location>
</feature>
<feature type="short sequence motif" description="'HIGH' region">
    <location>
        <begin position="81"/>
        <end position="89"/>
    </location>
</feature>
<feature type="short sequence motif" description="'KMSKS' region">
    <location>
        <begin position="252"/>
        <end position="256"/>
    </location>
</feature>
<protein>
    <recommendedName>
        <fullName evidence="1">Tryptophan--tRNA ligase</fullName>
        <ecNumber evidence="1">6.1.1.2</ecNumber>
    </recommendedName>
    <alternativeName>
        <fullName evidence="1">Tryptophanyl-tRNA synthetase</fullName>
        <shortName evidence="1">TrpRS</shortName>
    </alternativeName>
</protein>
<dbReference type="EC" id="6.1.1.2" evidence="1"/>
<dbReference type="EMBL" id="AP006878">
    <property type="protein sequence ID" value="BAD86063.1"/>
    <property type="molecule type" value="Genomic_DNA"/>
</dbReference>
<dbReference type="RefSeq" id="WP_011250825.1">
    <property type="nucleotide sequence ID" value="NC_006624.1"/>
</dbReference>
<dbReference type="SMR" id="Q5JEP3"/>
<dbReference type="FunCoup" id="Q5JEP3">
    <property type="interactions" value="237"/>
</dbReference>
<dbReference type="STRING" id="69014.TK1874"/>
<dbReference type="EnsemblBacteria" id="BAD86063">
    <property type="protein sequence ID" value="BAD86063"/>
    <property type="gene ID" value="TK1874"/>
</dbReference>
<dbReference type="GeneID" id="78448405"/>
<dbReference type="KEGG" id="tko:TK1874"/>
<dbReference type="PATRIC" id="fig|69014.16.peg.1832"/>
<dbReference type="eggNOG" id="arCOG01887">
    <property type="taxonomic scope" value="Archaea"/>
</dbReference>
<dbReference type="HOGENOM" id="CLU_032621_0_1_2"/>
<dbReference type="InParanoid" id="Q5JEP3"/>
<dbReference type="OrthoDB" id="371821at2157"/>
<dbReference type="PhylomeDB" id="Q5JEP3"/>
<dbReference type="Proteomes" id="UP000000536">
    <property type="component" value="Chromosome"/>
</dbReference>
<dbReference type="GO" id="GO:0005737">
    <property type="term" value="C:cytoplasm"/>
    <property type="evidence" value="ECO:0000318"/>
    <property type="project" value="GO_Central"/>
</dbReference>
<dbReference type="GO" id="GO:0005524">
    <property type="term" value="F:ATP binding"/>
    <property type="evidence" value="ECO:0007669"/>
    <property type="project" value="UniProtKB-UniRule"/>
</dbReference>
<dbReference type="GO" id="GO:0004830">
    <property type="term" value="F:tryptophan-tRNA ligase activity"/>
    <property type="evidence" value="ECO:0000318"/>
    <property type="project" value="GO_Central"/>
</dbReference>
<dbReference type="GO" id="GO:0006436">
    <property type="term" value="P:tryptophanyl-tRNA aminoacylation"/>
    <property type="evidence" value="ECO:0000318"/>
    <property type="project" value="GO_Central"/>
</dbReference>
<dbReference type="CDD" id="cd00806">
    <property type="entry name" value="TrpRS_core"/>
    <property type="match status" value="1"/>
</dbReference>
<dbReference type="FunFam" id="1.10.240.10:FF:000007">
    <property type="entry name" value="Tryptophan--tRNA ligase"/>
    <property type="match status" value="1"/>
</dbReference>
<dbReference type="FunFam" id="3.40.50.620:FF:000138">
    <property type="entry name" value="Tryptophan--tRNA ligase"/>
    <property type="match status" value="1"/>
</dbReference>
<dbReference type="Gene3D" id="3.40.50.620">
    <property type="entry name" value="HUPs"/>
    <property type="match status" value="1"/>
</dbReference>
<dbReference type="Gene3D" id="1.10.240.10">
    <property type="entry name" value="Tyrosyl-Transfer RNA Synthetase"/>
    <property type="match status" value="1"/>
</dbReference>
<dbReference type="HAMAP" id="MF_00140_A">
    <property type="entry name" value="Trp_tRNA_synth_A"/>
    <property type="match status" value="1"/>
</dbReference>
<dbReference type="InterPro" id="IPR001412">
    <property type="entry name" value="aa-tRNA-synth_I_CS"/>
</dbReference>
<dbReference type="InterPro" id="IPR002305">
    <property type="entry name" value="aa-tRNA-synth_Ic"/>
</dbReference>
<dbReference type="InterPro" id="IPR014729">
    <property type="entry name" value="Rossmann-like_a/b/a_fold"/>
</dbReference>
<dbReference type="InterPro" id="IPR002306">
    <property type="entry name" value="Trp-tRNA-ligase"/>
</dbReference>
<dbReference type="InterPro" id="IPR020653">
    <property type="entry name" value="Tryptophan-tRNA-ligase_arc"/>
</dbReference>
<dbReference type="NCBIfam" id="NF008924">
    <property type="entry name" value="PRK12285.1-1"/>
    <property type="match status" value="1"/>
</dbReference>
<dbReference type="NCBIfam" id="NF008927">
    <property type="entry name" value="PRK12285.1-4"/>
    <property type="match status" value="1"/>
</dbReference>
<dbReference type="NCBIfam" id="TIGR00233">
    <property type="entry name" value="trpS"/>
    <property type="match status" value="1"/>
</dbReference>
<dbReference type="PANTHER" id="PTHR10055:SF1">
    <property type="entry name" value="TRYPTOPHAN--TRNA LIGASE, CYTOPLASMIC"/>
    <property type="match status" value="1"/>
</dbReference>
<dbReference type="PANTHER" id="PTHR10055">
    <property type="entry name" value="TRYPTOPHANYL-TRNA SYNTHETASE"/>
    <property type="match status" value="1"/>
</dbReference>
<dbReference type="Pfam" id="PF00579">
    <property type="entry name" value="tRNA-synt_1b"/>
    <property type="match status" value="1"/>
</dbReference>
<dbReference type="PRINTS" id="PR01039">
    <property type="entry name" value="TRNASYNTHTRP"/>
</dbReference>
<dbReference type="SUPFAM" id="SSF52374">
    <property type="entry name" value="Nucleotidylyl transferase"/>
    <property type="match status" value="1"/>
</dbReference>
<dbReference type="PROSITE" id="PS00178">
    <property type="entry name" value="AA_TRNA_LIGASE_I"/>
    <property type="match status" value="1"/>
</dbReference>
<accession>Q5JEP3</accession>
<comment type="catalytic activity">
    <reaction evidence="1">
        <text>tRNA(Trp) + L-tryptophan + ATP = L-tryptophyl-tRNA(Trp) + AMP + diphosphate + H(+)</text>
        <dbReference type="Rhea" id="RHEA:24080"/>
        <dbReference type="Rhea" id="RHEA-COMP:9671"/>
        <dbReference type="Rhea" id="RHEA-COMP:9705"/>
        <dbReference type="ChEBI" id="CHEBI:15378"/>
        <dbReference type="ChEBI" id="CHEBI:30616"/>
        <dbReference type="ChEBI" id="CHEBI:33019"/>
        <dbReference type="ChEBI" id="CHEBI:57912"/>
        <dbReference type="ChEBI" id="CHEBI:78442"/>
        <dbReference type="ChEBI" id="CHEBI:78535"/>
        <dbReference type="ChEBI" id="CHEBI:456215"/>
        <dbReference type="EC" id="6.1.1.2"/>
    </reaction>
</comment>
<comment type="subcellular location">
    <subcellularLocation>
        <location evidence="1">Cytoplasm</location>
    </subcellularLocation>
</comment>
<comment type="similarity">
    <text evidence="1">Belongs to the class-I aminoacyl-tRNA synthetase family.</text>
</comment>